<feature type="chain" id="PRO_0000388582" description="Golgi to ER traffic protein 1">
    <location>
        <begin position="1"/>
        <end position="199"/>
    </location>
</feature>
<feature type="topological domain" description="Lumenal" evidence="1">
    <location>
        <begin position="1"/>
        <end position="11"/>
    </location>
</feature>
<feature type="transmembrane region" description="Helical" evidence="1">
    <location>
        <begin position="12"/>
        <end position="31"/>
    </location>
</feature>
<feature type="topological domain" description="Cytoplasmic" evidence="1">
    <location>
        <begin position="32"/>
        <end position="115"/>
    </location>
</feature>
<feature type="transmembrane region" description="Helical" evidence="1">
    <location>
        <begin position="116"/>
        <end position="136"/>
    </location>
</feature>
<feature type="topological domain" description="Lumenal" evidence="1">
    <location>
        <begin position="137"/>
        <end position="160"/>
    </location>
</feature>
<feature type="transmembrane region" description="Helical" evidence="1">
    <location>
        <begin position="161"/>
        <end position="177"/>
    </location>
</feature>
<feature type="topological domain" description="Cytoplasmic" evidence="1">
    <location>
        <begin position="178"/>
        <end position="199"/>
    </location>
</feature>
<feature type="coiled-coil region" evidence="1">
    <location>
        <begin position="76"/>
        <end position="116"/>
    </location>
</feature>
<comment type="function">
    <text evidence="1">Required for the post-translational delivery of tail-anchored (TA) proteins to the endoplasmic reticulum. Together with GET2, acts as a membrane receptor for soluble GET3, which recognizes and selectively binds the transmembrane domain of TA proteins in the cytosol. The GET complex cooperates with the HDEL receptor ERD2 to mediate the ATP-dependent retrieval of resident ER proteins that contain a C-terminal H-D-E-L retention signal from the Golgi to the ER.</text>
</comment>
<comment type="subunit">
    <text evidence="1">Component of the Golgi to ER traffic (GET) complex, which is composed of GET1, GET2 and GET3. Within the complex, GET1 and GET2 form a heterotetramer which is stabilized by phosphatidylinositol binding and which binds to the GET3 homodimer.</text>
</comment>
<comment type="subcellular location">
    <subcellularLocation>
        <location evidence="1">Endoplasmic reticulum membrane</location>
        <topology evidence="1">Multi-pass membrane protein</topology>
    </subcellularLocation>
    <subcellularLocation>
        <location evidence="1">Golgi apparatus membrane</location>
        <topology evidence="1">Multi-pass membrane protein</topology>
    </subcellularLocation>
</comment>
<comment type="similarity">
    <text evidence="1">Belongs to the WRB/GET1 family.</text>
</comment>
<protein>
    <recommendedName>
        <fullName evidence="1">Golgi to ER traffic protein 1</fullName>
    </recommendedName>
    <alternativeName>
        <fullName evidence="1">Guided entry of tail-anchored proteins 1</fullName>
    </alternativeName>
</protein>
<reference key="1">
    <citation type="journal article" date="2009" name="Nature">
        <title>Evolution of pathogenicity and sexual reproduction in eight Candida genomes.</title>
        <authorList>
            <person name="Butler G."/>
            <person name="Rasmussen M.D."/>
            <person name="Lin M.F."/>
            <person name="Santos M.A.S."/>
            <person name="Sakthikumar S."/>
            <person name="Munro C.A."/>
            <person name="Rheinbay E."/>
            <person name="Grabherr M."/>
            <person name="Forche A."/>
            <person name="Reedy J.L."/>
            <person name="Agrafioti I."/>
            <person name="Arnaud M.B."/>
            <person name="Bates S."/>
            <person name="Brown A.J.P."/>
            <person name="Brunke S."/>
            <person name="Costanzo M.C."/>
            <person name="Fitzpatrick D.A."/>
            <person name="de Groot P.W.J."/>
            <person name="Harris D."/>
            <person name="Hoyer L.L."/>
            <person name="Hube B."/>
            <person name="Klis F.M."/>
            <person name="Kodira C."/>
            <person name="Lennard N."/>
            <person name="Logue M.E."/>
            <person name="Martin R."/>
            <person name="Neiman A.M."/>
            <person name="Nikolaou E."/>
            <person name="Quail M.A."/>
            <person name="Quinn J."/>
            <person name="Santos M.C."/>
            <person name="Schmitzberger F.F."/>
            <person name="Sherlock G."/>
            <person name="Shah P."/>
            <person name="Silverstein K.A.T."/>
            <person name="Skrzypek M.S."/>
            <person name="Soll D."/>
            <person name="Staggs R."/>
            <person name="Stansfield I."/>
            <person name="Stumpf M.P.H."/>
            <person name="Sudbery P.E."/>
            <person name="Srikantha T."/>
            <person name="Zeng Q."/>
            <person name="Berman J."/>
            <person name="Berriman M."/>
            <person name="Heitman J."/>
            <person name="Gow N.A.R."/>
            <person name="Lorenz M.C."/>
            <person name="Birren B.W."/>
            <person name="Kellis M."/>
            <person name="Cuomo C.A."/>
        </authorList>
    </citation>
    <scope>NUCLEOTIDE SEQUENCE [LARGE SCALE GENOMIC DNA]</scope>
    <source>
        <strain>WO-1</strain>
    </source>
</reference>
<keyword id="KW-0175">Coiled coil</keyword>
<keyword id="KW-0256">Endoplasmic reticulum</keyword>
<keyword id="KW-0931">ER-Golgi transport</keyword>
<keyword id="KW-0333">Golgi apparatus</keyword>
<keyword id="KW-0472">Membrane</keyword>
<keyword id="KW-0812">Transmembrane</keyword>
<keyword id="KW-1133">Transmembrane helix</keyword>
<keyword id="KW-0813">Transport</keyword>
<sequence length="199" mass="22982">MLLPDLHPYTILLSIFLVLVVKQLVATIGKSTIQEFVWLVYLKVSSNQSIKTYNSKQHELHETNRQKRAISAQDEYAKWTKLNRQADKLSAELQKLNQEIQQQKSSIDKASNALILVLTTLPIWIARVFYRKTHLFYIRQGIFPKYVEWVLALPFLPNGAVGLTIWMFAVNSVVSNFSFLVSFPFAKRVSKPVRDTKVE</sequence>
<proteinExistence type="inferred from homology"/>
<dbReference type="EMBL" id="CH672350">
    <property type="protein sequence ID" value="EEQ45484.1"/>
    <property type="molecule type" value="Genomic_DNA"/>
</dbReference>
<dbReference type="SMR" id="C4YJ00"/>
<dbReference type="PaxDb" id="5476-C4YJ00"/>
<dbReference type="VEuPathDB" id="FungiDB:CAWG_03812"/>
<dbReference type="HOGENOM" id="CLU_089418_2_0_1"/>
<dbReference type="OMA" id="AEWIISF"/>
<dbReference type="OrthoDB" id="22744at766764"/>
<dbReference type="Proteomes" id="UP000001429">
    <property type="component" value="Chromosome 2, Supercontig 1.5"/>
</dbReference>
<dbReference type="GO" id="GO:0005789">
    <property type="term" value="C:endoplasmic reticulum membrane"/>
    <property type="evidence" value="ECO:0007669"/>
    <property type="project" value="UniProtKB-SubCell"/>
</dbReference>
<dbReference type="GO" id="GO:0043529">
    <property type="term" value="C:GET complex"/>
    <property type="evidence" value="ECO:0007669"/>
    <property type="project" value="UniProtKB-UniRule"/>
</dbReference>
<dbReference type="GO" id="GO:0000139">
    <property type="term" value="C:Golgi membrane"/>
    <property type="evidence" value="ECO:0007669"/>
    <property type="project" value="UniProtKB-SubCell"/>
</dbReference>
<dbReference type="GO" id="GO:0043495">
    <property type="term" value="F:protein-membrane adaptor activity"/>
    <property type="evidence" value="ECO:0007669"/>
    <property type="project" value="TreeGrafter"/>
</dbReference>
<dbReference type="GO" id="GO:0071816">
    <property type="term" value="P:tail-anchored membrane protein insertion into ER membrane"/>
    <property type="evidence" value="ECO:0007669"/>
    <property type="project" value="InterPro"/>
</dbReference>
<dbReference type="GO" id="GO:0016192">
    <property type="term" value="P:vesicle-mediated transport"/>
    <property type="evidence" value="ECO:0007669"/>
    <property type="project" value="UniProtKB-KW"/>
</dbReference>
<dbReference type="FunFam" id="1.10.287.660:FF:000006">
    <property type="entry name" value="Protein GET1"/>
    <property type="match status" value="1"/>
</dbReference>
<dbReference type="Gene3D" id="1.10.287.660">
    <property type="entry name" value="Helix hairpin bin"/>
    <property type="match status" value="1"/>
</dbReference>
<dbReference type="HAMAP" id="MF_03113">
    <property type="entry name" value="Get1"/>
    <property type="match status" value="1"/>
</dbReference>
<dbReference type="InterPro" id="IPR028945">
    <property type="entry name" value="Get1"/>
</dbReference>
<dbReference type="InterPro" id="IPR027538">
    <property type="entry name" value="Get1_fungi"/>
</dbReference>
<dbReference type="InterPro" id="IPR029012">
    <property type="entry name" value="Helix_hairpin_bin_sf"/>
</dbReference>
<dbReference type="PANTHER" id="PTHR42650:SF1">
    <property type="entry name" value="GUIDED ENTRY OF TAIL-ANCHORED PROTEINS FACTOR 1"/>
    <property type="match status" value="1"/>
</dbReference>
<dbReference type="PANTHER" id="PTHR42650">
    <property type="entry name" value="TAIL-ANCHORED PROTEIN INSERTION RECEPTOR WRB"/>
    <property type="match status" value="1"/>
</dbReference>
<dbReference type="Pfam" id="PF04420">
    <property type="entry name" value="CHD5"/>
    <property type="match status" value="1"/>
</dbReference>
<accession>C4YJ00</accession>
<evidence type="ECO:0000255" key="1">
    <source>
        <dbReference type="HAMAP-Rule" id="MF_03113"/>
    </source>
</evidence>
<name>GET1_CANAW</name>
<organism>
    <name type="scientific">Candida albicans (strain WO-1)</name>
    <name type="common">Yeast</name>
    <dbReference type="NCBI Taxonomy" id="294748"/>
    <lineage>
        <taxon>Eukaryota</taxon>
        <taxon>Fungi</taxon>
        <taxon>Dikarya</taxon>
        <taxon>Ascomycota</taxon>
        <taxon>Saccharomycotina</taxon>
        <taxon>Pichiomycetes</taxon>
        <taxon>Debaryomycetaceae</taxon>
        <taxon>Candida/Lodderomyces clade</taxon>
        <taxon>Candida</taxon>
    </lineage>
</organism>
<gene>
    <name evidence="1" type="primary">GET1</name>
    <name type="ORF">CAWG_03812</name>
</gene>